<evidence type="ECO:0000255" key="1">
    <source>
        <dbReference type="HAMAP-Rule" id="MF_00049"/>
    </source>
</evidence>
<comment type="catalytic activity">
    <reaction evidence="1">
        <text>tRNA(Leu) + L-leucine + ATP = L-leucyl-tRNA(Leu) + AMP + diphosphate</text>
        <dbReference type="Rhea" id="RHEA:11688"/>
        <dbReference type="Rhea" id="RHEA-COMP:9613"/>
        <dbReference type="Rhea" id="RHEA-COMP:9622"/>
        <dbReference type="ChEBI" id="CHEBI:30616"/>
        <dbReference type="ChEBI" id="CHEBI:33019"/>
        <dbReference type="ChEBI" id="CHEBI:57427"/>
        <dbReference type="ChEBI" id="CHEBI:78442"/>
        <dbReference type="ChEBI" id="CHEBI:78494"/>
        <dbReference type="ChEBI" id="CHEBI:456215"/>
        <dbReference type="EC" id="6.1.1.4"/>
    </reaction>
</comment>
<comment type="subcellular location">
    <subcellularLocation>
        <location evidence="1">Cytoplasm</location>
    </subcellularLocation>
</comment>
<comment type="similarity">
    <text evidence="1">Belongs to the class-I aminoacyl-tRNA synthetase family.</text>
</comment>
<sequence>MYNHKVVEKKWQKYWLENKTFKTGTDPEKPKYYVLDMFPYPSGKGLHVGHPEGYTATDIMARMKRAQGYNVLHPMGWDAFGLPAEQYALQTGNDPATFTDENIAHFKKQLQALGFSYDWDREIKTTDPNYYKWTQWIFEQMYKMGLAYEAEVPVNWSPDLGTVVANEEVIDGKTERGGYPVYRRKMRQWMLKITAYADRLLDDLDDLDWPEPIKEMQRNWIGRSVGAQVTFKIKDSDKSFAVFTTRPDTLFGCSYTVLAPENELVKEITSPEQKEAVDAYIKSIESKSDLERTDLNKDKTGVFTGAYAINPVNGEEVPVWISDYVLATYGTGAVMAVPAHDERDYAFATKFDLPIKEVVEGGDISKEAFAGDGVHVNSDFLNGLHNEEAKAKMVDWLTEKGVGEKKVNYKMRDWNFSRQRYWGEPIPVIHWEDGETTLVPEDELPLRLPKESNIKPSGTPESPLANLTDWVNVVDENGRKGKRETNTMPQWAGSSWYFLRYIDPHNDKALADPELLKKWMPVDLYIGGAEHATLHLLYARFWHKVLYDLGVVPTKEPFQKLYNQGLILKNHEKMSKSRGNVVNPDDVVDEYGADSLRTYEMFMGPLNASIDWDDNGPSGVKKFLDRVWRTFVNDLDLDPIPSEKITDKNDGKLDKIYNETVKTVTEHFEELRFNTAISQMMVFMNACQKVDKIPREYAEGFVKLMAPVAPHMMEEIWHVFGHDESVQFAAWPTYDASKLVESTVEMAVTVNGKKRGNFQIAKDASREEAQAAATALTHVKEFLEGKEIKKVIVVPNKIVNIVAK</sequence>
<feature type="chain" id="PRO_0000334766" description="Leucine--tRNA ligase">
    <location>
        <begin position="1"/>
        <end position="804"/>
    </location>
</feature>
<feature type="short sequence motif" description="'HIGH' region">
    <location>
        <begin position="39"/>
        <end position="50"/>
    </location>
</feature>
<feature type="short sequence motif" description="'KMSKS' region">
    <location>
        <begin position="573"/>
        <end position="577"/>
    </location>
</feature>
<feature type="binding site" evidence="1">
    <location>
        <position position="576"/>
    </location>
    <ligand>
        <name>ATP</name>
        <dbReference type="ChEBI" id="CHEBI:30616"/>
    </ligand>
</feature>
<gene>
    <name evidence="1" type="primary">leuS</name>
    <name type="ordered locus">Ldb1570</name>
</gene>
<reference key="1">
    <citation type="journal article" date="2006" name="Proc. Natl. Acad. Sci. U.S.A.">
        <title>The complete genome sequence of Lactobacillus bulgaricus reveals extensive and ongoing reductive evolution.</title>
        <authorList>
            <person name="van de Guchte M."/>
            <person name="Penaud S."/>
            <person name="Grimaldi C."/>
            <person name="Barbe V."/>
            <person name="Bryson K."/>
            <person name="Nicolas P."/>
            <person name="Robert C."/>
            <person name="Oztas S."/>
            <person name="Mangenot S."/>
            <person name="Couloux A."/>
            <person name="Loux V."/>
            <person name="Dervyn R."/>
            <person name="Bossy R."/>
            <person name="Bolotin A."/>
            <person name="Batto J.-M."/>
            <person name="Walunas T."/>
            <person name="Gibrat J.-F."/>
            <person name="Bessieres P."/>
            <person name="Weissenbach J."/>
            <person name="Ehrlich S.D."/>
            <person name="Maguin E."/>
        </authorList>
    </citation>
    <scope>NUCLEOTIDE SEQUENCE [LARGE SCALE GENOMIC DNA]</scope>
    <source>
        <strain>ATCC 11842 / DSM 20081 / BCRC 10696 / JCM 1002 / NBRC 13953 / NCIMB 11778 / NCTC 12712 / WDCM 00102 / Lb 14</strain>
    </source>
</reference>
<dbReference type="EC" id="6.1.1.4" evidence="1"/>
<dbReference type="EMBL" id="CR954253">
    <property type="protein sequence ID" value="CAI98369.1"/>
    <property type="molecule type" value="Genomic_DNA"/>
</dbReference>
<dbReference type="RefSeq" id="WP_011544104.1">
    <property type="nucleotide sequence ID" value="NC_008054.1"/>
</dbReference>
<dbReference type="SMR" id="Q1G971"/>
<dbReference type="STRING" id="390333.Ldb1570"/>
<dbReference type="KEGG" id="ldb:Ldb1570"/>
<dbReference type="PATRIC" id="fig|390333.13.peg.1403"/>
<dbReference type="eggNOG" id="COG0495">
    <property type="taxonomic scope" value="Bacteria"/>
</dbReference>
<dbReference type="HOGENOM" id="CLU_004427_0_0_9"/>
<dbReference type="BioCyc" id="LDEL390333:LDB_RS06755-MONOMER"/>
<dbReference type="Proteomes" id="UP000001259">
    <property type="component" value="Chromosome"/>
</dbReference>
<dbReference type="GO" id="GO:0005829">
    <property type="term" value="C:cytosol"/>
    <property type="evidence" value="ECO:0007669"/>
    <property type="project" value="TreeGrafter"/>
</dbReference>
<dbReference type="GO" id="GO:0002161">
    <property type="term" value="F:aminoacyl-tRNA deacylase activity"/>
    <property type="evidence" value="ECO:0007669"/>
    <property type="project" value="InterPro"/>
</dbReference>
<dbReference type="GO" id="GO:0005524">
    <property type="term" value="F:ATP binding"/>
    <property type="evidence" value="ECO:0007669"/>
    <property type="project" value="UniProtKB-UniRule"/>
</dbReference>
<dbReference type="GO" id="GO:0004823">
    <property type="term" value="F:leucine-tRNA ligase activity"/>
    <property type="evidence" value="ECO:0007669"/>
    <property type="project" value="UniProtKB-UniRule"/>
</dbReference>
<dbReference type="GO" id="GO:0006429">
    <property type="term" value="P:leucyl-tRNA aminoacylation"/>
    <property type="evidence" value="ECO:0007669"/>
    <property type="project" value="UniProtKB-UniRule"/>
</dbReference>
<dbReference type="CDD" id="cd07958">
    <property type="entry name" value="Anticodon_Ia_Leu_BEm"/>
    <property type="match status" value="1"/>
</dbReference>
<dbReference type="CDD" id="cd00812">
    <property type="entry name" value="LeuRS_core"/>
    <property type="match status" value="1"/>
</dbReference>
<dbReference type="FunFam" id="1.10.730.10:FF:000012">
    <property type="entry name" value="Leucine--tRNA ligase"/>
    <property type="match status" value="1"/>
</dbReference>
<dbReference type="FunFam" id="3.10.20.590:FF:000001">
    <property type="entry name" value="Leucine--tRNA ligase"/>
    <property type="match status" value="1"/>
</dbReference>
<dbReference type="FunFam" id="3.40.50.620:FF:000056">
    <property type="entry name" value="Leucine--tRNA ligase"/>
    <property type="match status" value="1"/>
</dbReference>
<dbReference type="FunFam" id="3.40.50.620:FF:000077">
    <property type="entry name" value="Leucine--tRNA ligase"/>
    <property type="match status" value="1"/>
</dbReference>
<dbReference type="FunFam" id="1.10.730.10:FF:000011">
    <property type="entry name" value="Leucine--tRNA ligase chloroplastic/mitochondrial"/>
    <property type="match status" value="1"/>
</dbReference>
<dbReference type="Gene3D" id="3.10.20.590">
    <property type="match status" value="1"/>
</dbReference>
<dbReference type="Gene3D" id="3.40.50.620">
    <property type="entry name" value="HUPs"/>
    <property type="match status" value="2"/>
</dbReference>
<dbReference type="Gene3D" id="1.10.730.10">
    <property type="entry name" value="Isoleucyl-tRNA Synthetase, Domain 1"/>
    <property type="match status" value="1"/>
</dbReference>
<dbReference type="HAMAP" id="MF_00049_B">
    <property type="entry name" value="Leu_tRNA_synth_B"/>
    <property type="match status" value="1"/>
</dbReference>
<dbReference type="InterPro" id="IPR001412">
    <property type="entry name" value="aa-tRNA-synth_I_CS"/>
</dbReference>
<dbReference type="InterPro" id="IPR002300">
    <property type="entry name" value="aa-tRNA-synth_Ia"/>
</dbReference>
<dbReference type="InterPro" id="IPR002302">
    <property type="entry name" value="Leu-tRNA-ligase"/>
</dbReference>
<dbReference type="InterPro" id="IPR025709">
    <property type="entry name" value="Leu_tRNA-synth_edit"/>
</dbReference>
<dbReference type="InterPro" id="IPR013155">
    <property type="entry name" value="M/V/L/I-tRNA-synth_anticd-bd"/>
</dbReference>
<dbReference type="InterPro" id="IPR015413">
    <property type="entry name" value="Methionyl/Leucyl_tRNA_Synth"/>
</dbReference>
<dbReference type="InterPro" id="IPR014729">
    <property type="entry name" value="Rossmann-like_a/b/a_fold"/>
</dbReference>
<dbReference type="InterPro" id="IPR009080">
    <property type="entry name" value="tRNAsynth_Ia_anticodon-bd"/>
</dbReference>
<dbReference type="InterPro" id="IPR009008">
    <property type="entry name" value="Val/Leu/Ile-tRNA-synth_edit"/>
</dbReference>
<dbReference type="NCBIfam" id="TIGR00396">
    <property type="entry name" value="leuS_bact"/>
    <property type="match status" value="1"/>
</dbReference>
<dbReference type="PANTHER" id="PTHR43740:SF2">
    <property type="entry name" value="LEUCINE--TRNA LIGASE, MITOCHONDRIAL"/>
    <property type="match status" value="1"/>
</dbReference>
<dbReference type="PANTHER" id="PTHR43740">
    <property type="entry name" value="LEUCYL-TRNA SYNTHETASE"/>
    <property type="match status" value="1"/>
</dbReference>
<dbReference type="Pfam" id="PF08264">
    <property type="entry name" value="Anticodon_1"/>
    <property type="match status" value="1"/>
</dbReference>
<dbReference type="Pfam" id="PF00133">
    <property type="entry name" value="tRNA-synt_1"/>
    <property type="match status" value="1"/>
</dbReference>
<dbReference type="Pfam" id="PF13603">
    <property type="entry name" value="tRNA-synt_1_2"/>
    <property type="match status" value="1"/>
</dbReference>
<dbReference type="Pfam" id="PF09334">
    <property type="entry name" value="tRNA-synt_1g"/>
    <property type="match status" value="1"/>
</dbReference>
<dbReference type="PRINTS" id="PR00985">
    <property type="entry name" value="TRNASYNTHLEU"/>
</dbReference>
<dbReference type="SUPFAM" id="SSF47323">
    <property type="entry name" value="Anticodon-binding domain of a subclass of class I aminoacyl-tRNA synthetases"/>
    <property type="match status" value="1"/>
</dbReference>
<dbReference type="SUPFAM" id="SSF52374">
    <property type="entry name" value="Nucleotidylyl transferase"/>
    <property type="match status" value="1"/>
</dbReference>
<dbReference type="SUPFAM" id="SSF50677">
    <property type="entry name" value="ValRS/IleRS/LeuRS editing domain"/>
    <property type="match status" value="1"/>
</dbReference>
<dbReference type="PROSITE" id="PS00178">
    <property type="entry name" value="AA_TRNA_LIGASE_I"/>
    <property type="match status" value="1"/>
</dbReference>
<accession>Q1G971</accession>
<keyword id="KW-0030">Aminoacyl-tRNA synthetase</keyword>
<keyword id="KW-0067">ATP-binding</keyword>
<keyword id="KW-0963">Cytoplasm</keyword>
<keyword id="KW-0436">Ligase</keyword>
<keyword id="KW-0547">Nucleotide-binding</keyword>
<keyword id="KW-0648">Protein biosynthesis</keyword>
<keyword id="KW-1185">Reference proteome</keyword>
<proteinExistence type="inferred from homology"/>
<organism>
    <name type="scientific">Lactobacillus delbrueckii subsp. bulgaricus (strain ATCC 11842 / DSM 20081 / BCRC 10696 / JCM 1002 / NBRC 13953 / NCIMB 11778 / NCTC 12712 / WDCM 00102 / Lb 14)</name>
    <dbReference type="NCBI Taxonomy" id="390333"/>
    <lineage>
        <taxon>Bacteria</taxon>
        <taxon>Bacillati</taxon>
        <taxon>Bacillota</taxon>
        <taxon>Bacilli</taxon>
        <taxon>Lactobacillales</taxon>
        <taxon>Lactobacillaceae</taxon>
        <taxon>Lactobacillus</taxon>
    </lineage>
</organism>
<protein>
    <recommendedName>
        <fullName evidence="1">Leucine--tRNA ligase</fullName>
        <ecNumber evidence="1">6.1.1.4</ecNumber>
    </recommendedName>
    <alternativeName>
        <fullName evidence="1">Leucyl-tRNA synthetase</fullName>
        <shortName evidence="1">LeuRS</shortName>
    </alternativeName>
</protein>
<name>SYL_LACDA</name>